<sequence>MADRLRELTQTRLQKIWIPHQCDRLQQRRGSSIPQFTNSPTMIVMVGLPARGKTYISKKLTRYLNWIGTPTKVFNVGQYRRDATQSYNNYQFFRADNQEAMKIRKQCALHALKDVHTYLSREEGHVAVFDATNTTRERRSVILQFAKERGYKVFFIESICDDPDIIAENITQVKLSSPDYTGCDREKVLEDFLKRIDCYQMNYEPLHDDLDSSLSYIKIFNVGSRYLVNRVQDHIQSRAVYYLMNIHVTPRSIYLSRHGESELNLLGRIGGDSGLSVRGKQYAHELGNFIKSQQIPDLKVWTSHMKRTIQTAEALHVPYEQWKALNEIDAGVCEEMTYEEIQDHFPEEFALRDQDKYRYRYPKGESYEDIVQRLEPVIMELERQENVLVICHQAVMRCLLAYFLDKTAEELPYLKCPLHTVLKLTPVAYGCKVESIYLNIEAVNTHREKPLNVEVSRDPEEALDTVPEHF</sequence>
<organism>
    <name type="scientific">Aquarana catesbeiana</name>
    <name type="common">American bullfrog</name>
    <name type="synonym">Rana catesbeiana</name>
    <dbReference type="NCBI Taxonomy" id="8400"/>
    <lineage>
        <taxon>Eukaryota</taxon>
        <taxon>Metazoa</taxon>
        <taxon>Chordata</taxon>
        <taxon>Craniata</taxon>
        <taxon>Vertebrata</taxon>
        <taxon>Euteleostomi</taxon>
        <taxon>Amphibia</taxon>
        <taxon>Batrachia</taxon>
        <taxon>Anura</taxon>
        <taxon>Neobatrachia</taxon>
        <taxon>Ranoidea</taxon>
        <taxon>Ranidae</taxon>
        <taxon>Aquarana</taxon>
    </lineage>
</organism>
<keyword id="KW-0025">Alternative splicing</keyword>
<keyword id="KW-0067">ATP-binding</keyword>
<keyword id="KW-0378">Hydrolase</keyword>
<keyword id="KW-0418">Kinase</keyword>
<keyword id="KW-0511">Multifunctional enzyme</keyword>
<keyword id="KW-0547">Nucleotide-binding</keyword>
<keyword id="KW-0597">Phosphoprotein</keyword>
<keyword id="KW-0808">Transferase</keyword>
<reference key="1">
    <citation type="journal article" date="1994" name="Biochem. Biophys. Res. Commun.">
        <title>Cloning of cDNAs for fructose 6-phosphate 2-kinase/fructose 2,6-bisphosphatase from frog skeletal muscle and liver, and their expression in skeletal muscle.</title>
        <authorList>
            <person name="Sakai A."/>
            <person name="Watanabe F."/>
            <person name="Furuya E."/>
        </authorList>
    </citation>
    <scope>NUCLEOTIDE SEQUENCE [MRNA] (ISOFORMS LIVER AND MUSCLE)</scope>
    <source>
        <tissue>Liver</tissue>
        <tissue>Muscle</tissue>
    </source>
</reference>
<feature type="chain" id="PRO_0000179973" description="6-phosphofructo-2-kinase/fructose-2,6-bisphosphatase">
    <location>
        <begin position="1"/>
        <end position="470"/>
    </location>
</feature>
<feature type="region of interest" description="6-phosphofructo-2-kinase">
    <location>
        <begin position="1"/>
        <end position="249"/>
    </location>
</feature>
<feature type="region of interest" description="Fructose-2,6-bisphosphatase">
    <location>
        <begin position="250"/>
        <end position="470"/>
    </location>
</feature>
<feature type="active site" evidence="4">
    <location>
        <position position="130"/>
    </location>
</feature>
<feature type="active site" evidence="4">
    <location>
        <position position="160"/>
    </location>
</feature>
<feature type="active site" description="Tele-phosphohistidine intermediate" evidence="3">
    <location>
        <position position="258"/>
    </location>
</feature>
<feature type="active site" description="Proton donor/acceptor" evidence="3">
    <location>
        <position position="327"/>
    </location>
</feature>
<feature type="binding site" evidence="3">
    <location>
        <begin position="47"/>
        <end position="55"/>
    </location>
    <ligand>
        <name>ATP</name>
        <dbReference type="ChEBI" id="CHEBI:30616"/>
    </ligand>
</feature>
<feature type="binding site" evidence="3">
    <location>
        <position position="80"/>
    </location>
    <ligand>
        <name>beta-D-fructose 6-phosphate</name>
        <dbReference type="ChEBI" id="CHEBI:57634"/>
    </ligand>
</feature>
<feature type="binding site" evidence="3">
    <location>
        <position position="104"/>
    </location>
    <ligand>
        <name>beta-D-fructose 6-phosphate</name>
        <dbReference type="ChEBI" id="CHEBI:57634"/>
    </ligand>
</feature>
<feature type="binding site" evidence="3">
    <location>
        <position position="132"/>
    </location>
    <ligand>
        <name>beta-D-fructose 6-phosphate</name>
        <dbReference type="ChEBI" id="CHEBI:57634"/>
    </ligand>
</feature>
<feature type="binding site" evidence="3">
    <location>
        <position position="138"/>
    </location>
    <ligand>
        <name>beta-D-fructose 6-phosphate</name>
        <dbReference type="ChEBI" id="CHEBI:57634"/>
    </ligand>
</feature>
<feature type="binding site" evidence="3">
    <location>
        <begin position="169"/>
        <end position="174"/>
    </location>
    <ligand>
        <name>ATP</name>
        <dbReference type="ChEBI" id="CHEBI:30616"/>
    </ligand>
</feature>
<feature type="binding site" evidence="3">
    <location>
        <position position="174"/>
    </location>
    <ligand>
        <name>beta-D-fructose 6-phosphate</name>
        <dbReference type="ChEBI" id="CHEBI:57634"/>
    </ligand>
</feature>
<feature type="binding site" evidence="3">
    <location>
        <position position="195"/>
    </location>
    <ligand>
        <name>beta-D-fructose 6-phosphate</name>
        <dbReference type="ChEBI" id="CHEBI:57634"/>
    </ligand>
</feature>
<feature type="binding site" evidence="3">
    <location>
        <position position="199"/>
    </location>
    <ligand>
        <name>beta-D-fructose 6-phosphate</name>
        <dbReference type="ChEBI" id="CHEBI:57634"/>
    </ligand>
</feature>
<feature type="binding site" evidence="3">
    <location>
        <position position="257"/>
    </location>
    <ligand>
        <name>beta-D-fructose 2,6-bisphosphate</name>
        <dbReference type="ChEBI" id="CHEBI:58579"/>
    </ligand>
</feature>
<feature type="binding site" evidence="3">
    <location>
        <position position="264"/>
    </location>
    <ligand>
        <name>beta-D-fructose 2,6-bisphosphate</name>
        <dbReference type="ChEBI" id="CHEBI:58579"/>
    </ligand>
</feature>
<feature type="binding site" evidence="3">
    <location>
        <position position="270"/>
    </location>
    <ligand>
        <name>beta-D-fructose 2,6-bisphosphate</name>
        <dbReference type="ChEBI" id="CHEBI:58579"/>
    </ligand>
</feature>
<feature type="binding site" evidence="3">
    <location>
        <position position="338"/>
    </location>
    <ligand>
        <name>beta-D-fructose 2,6-bisphosphate</name>
        <dbReference type="ChEBI" id="CHEBI:58579"/>
    </ligand>
</feature>
<feature type="binding site" evidence="2">
    <location>
        <begin position="349"/>
        <end position="352"/>
    </location>
    <ligand>
        <name>ATP</name>
        <dbReference type="ChEBI" id="CHEBI:30616"/>
    </ligand>
</feature>
<feature type="binding site" evidence="3">
    <location>
        <position position="352"/>
    </location>
    <ligand>
        <name>beta-D-fructose 2,6-bisphosphate</name>
        <dbReference type="ChEBI" id="CHEBI:58579"/>
    </ligand>
</feature>
<feature type="binding site" evidence="3">
    <location>
        <position position="356"/>
    </location>
    <ligand>
        <name>beta-D-fructose 2,6-bisphosphate</name>
        <dbReference type="ChEBI" id="CHEBI:58579"/>
    </ligand>
</feature>
<feature type="binding site" evidence="3">
    <location>
        <position position="367"/>
    </location>
    <ligand>
        <name>beta-D-fructose 2,6-bisphosphate</name>
        <dbReference type="ChEBI" id="CHEBI:58579"/>
    </ligand>
</feature>
<feature type="binding site" evidence="2">
    <location>
        <begin position="393"/>
        <end position="397"/>
    </location>
    <ligand>
        <name>ATP</name>
        <dbReference type="ChEBI" id="CHEBI:30616"/>
    </ligand>
</feature>
<feature type="binding site" evidence="3">
    <location>
        <position position="393"/>
    </location>
    <ligand>
        <name>beta-D-fructose 2,6-bisphosphate</name>
        <dbReference type="ChEBI" id="CHEBI:58579"/>
    </ligand>
</feature>
<feature type="binding site" evidence="2">
    <location>
        <position position="397"/>
    </location>
    <ligand>
        <name>beta-D-fructose 2,6-bisphosphate</name>
        <dbReference type="ChEBI" id="CHEBI:58579"/>
    </ligand>
</feature>
<feature type="binding site" evidence="3">
    <location>
        <position position="429"/>
    </location>
    <ligand>
        <name>ATP</name>
        <dbReference type="ChEBI" id="CHEBI:30616"/>
    </ligand>
</feature>
<feature type="site" description="Transition state stabilizer" evidence="3">
    <location>
        <position position="257"/>
    </location>
</feature>
<feature type="site" description="Transition state stabilizer" evidence="3">
    <location>
        <position position="264"/>
    </location>
</feature>
<feature type="site" description="Transition state stabilizer" evidence="3">
    <location>
        <position position="392"/>
    </location>
</feature>
<feature type="modified residue" description="Phosphoserine; by PKA" evidence="1">
    <location>
        <position position="31"/>
    </location>
</feature>
<feature type="splice variant" id="VSP_004685" description="In isoform Muscle." evidence="5">
    <original>MADRLRELTQTRLQKIWIPHQCDRLQQRRGS</original>
    <variation>MEGNYKLLEDKASRIPA</variation>
    <location>
        <begin position="1"/>
        <end position="31"/>
    </location>
</feature>
<proteinExistence type="evidence at transcript level"/>
<evidence type="ECO:0000250" key="1"/>
<evidence type="ECO:0000250" key="2">
    <source>
        <dbReference type="UniProtKB" id="P07953"/>
    </source>
</evidence>
<evidence type="ECO:0000250" key="3">
    <source>
        <dbReference type="UniProtKB" id="Q16875"/>
    </source>
</evidence>
<evidence type="ECO:0000255" key="4"/>
<evidence type="ECO:0000303" key="5">
    <source>
    </source>
</evidence>
<evidence type="ECO:0000305" key="6"/>
<name>F26_AQUCT</name>
<dbReference type="EC" id="2.7.1.105"/>
<dbReference type="EC" id="3.1.3.46"/>
<dbReference type="EMBL" id="D25223">
    <property type="protein sequence ID" value="BAA04952.1"/>
    <property type="molecule type" value="mRNA"/>
</dbReference>
<dbReference type="EMBL" id="D25222">
    <property type="protein sequence ID" value="BAA04951.1"/>
    <property type="molecule type" value="mRNA"/>
</dbReference>
<dbReference type="PIR" id="JC2064">
    <property type="entry name" value="JC2064"/>
</dbReference>
<dbReference type="SMR" id="Q91309"/>
<dbReference type="GO" id="GO:0043540">
    <property type="term" value="C:6-phosphofructo-2-kinase/fructose-2,6-biphosphatase complex"/>
    <property type="evidence" value="ECO:0007669"/>
    <property type="project" value="TreeGrafter"/>
</dbReference>
<dbReference type="GO" id="GO:0003873">
    <property type="term" value="F:6-phosphofructo-2-kinase activity"/>
    <property type="evidence" value="ECO:0007669"/>
    <property type="project" value="UniProtKB-EC"/>
</dbReference>
<dbReference type="GO" id="GO:0005524">
    <property type="term" value="F:ATP binding"/>
    <property type="evidence" value="ECO:0007669"/>
    <property type="project" value="UniProtKB-KW"/>
</dbReference>
<dbReference type="GO" id="GO:0004331">
    <property type="term" value="F:fructose-2,6-bisphosphate 2-phosphatase activity"/>
    <property type="evidence" value="ECO:0007669"/>
    <property type="project" value="UniProtKB-EC"/>
</dbReference>
<dbReference type="GO" id="GO:0006003">
    <property type="term" value="P:fructose 2,6-bisphosphate metabolic process"/>
    <property type="evidence" value="ECO:0007669"/>
    <property type="project" value="InterPro"/>
</dbReference>
<dbReference type="GO" id="GO:0006000">
    <property type="term" value="P:fructose metabolic process"/>
    <property type="evidence" value="ECO:0007669"/>
    <property type="project" value="InterPro"/>
</dbReference>
<dbReference type="CDD" id="cd07067">
    <property type="entry name" value="HP_PGM_like"/>
    <property type="match status" value="1"/>
</dbReference>
<dbReference type="FunFam" id="3.40.50.1240:FF:000001">
    <property type="entry name" value="6-phosphofructo-2-kinase/fructose-2, 6-bisphosphatase 3 isoform 2"/>
    <property type="match status" value="1"/>
</dbReference>
<dbReference type="FunFam" id="3.40.50.300:FF:000047">
    <property type="entry name" value="6-phosphofructo-2-kinase/fructose-2, 6-bisphosphatase 3 isoform 2"/>
    <property type="match status" value="1"/>
</dbReference>
<dbReference type="Gene3D" id="3.40.50.300">
    <property type="entry name" value="P-loop containing nucleotide triphosphate hydrolases"/>
    <property type="match status" value="1"/>
</dbReference>
<dbReference type="Gene3D" id="3.40.50.1240">
    <property type="entry name" value="Phosphoglycerate mutase-like"/>
    <property type="match status" value="1"/>
</dbReference>
<dbReference type="InterPro" id="IPR003094">
    <property type="entry name" value="6Pfruct_kin"/>
</dbReference>
<dbReference type="InterPro" id="IPR013079">
    <property type="entry name" value="6Phosfructo_kin"/>
</dbReference>
<dbReference type="InterPro" id="IPR013078">
    <property type="entry name" value="His_Pase_superF_clade-1"/>
</dbReference>
<dbReference type="InterPro" id="IPR029033">
    <property type="entry name" value="His_PPase_superfam"/>
</dbReference>
<dbReference type="InterPro" id="IPR027417">
    <property type="entry name" value="P-loop_NTPase"/>
</dbReference>
<dbReference type="InterPro" id="IPR001345">
    <property type="entry name" value="PG/BPGM_mutase_AS"/>
</dbReference>
<dbReference type="PANTHER" id="PTHR10606">
    <property type="entry name" value="6-PHOSPHOFRUCTO-2-KINASE/FRUCTOSE-2,6-BISPHOSPHATASE"/>
    <property type="match status" value="1"/>
</dbReference>
<dbReference type="PANTHER" id="PTHR10606:SF15">
    <property type="entry name" value="6-PHOSPHOFRUCTO-2-KINASE_FRUCTOSE-2,6-BISPHOSPHATASE 1"/>
    <property type="match status" value="1"/>
</dbReference>
<dbReference type="Pfam" id="PF01591">
    <property type="entry name" value="6PF2K"/>
    <property type="match status" value="1"/>
</dbReference>
<dbReference type="Pfam" id="PF00300">
    <property type="entry name" value="His_Phos_1"/>
    <property type="match status" value="1"/>
</dbReference>
<dbReference type="PIRSF" id="PIRSF000709">
    <property type="entry name" value="6PFK_2-Ptase"/>
    <property type="match status" value="1"/>
</dbReference>
<dbReference type="PRINTS" id="PR00991">
    <property type="entry name" value="6PFRUCTKNASE"/>
</dbReference>
<dbReference type="SMART" id="SM00855">
    <property type="entry name" value="PGAM"/>
    <property type="match status" value="1"/>
</dbReference>
<dbReference type="SUPFAM" id="SSF52540">
    <property type="entry name" value="P-loop containing nucleoside triphosphate hydrolases"/>
    <property type="match status" value="1"/>
</dbReference>
<dbReference type="SUPFAM" id="SSF53254">
    <property type="entry name" value="Phosphoglycerate mutase-like"/>
    <property type="match status" value="1"/>
</dbReference>
<dbReference type="PROSITE" id="PS00175">
    <property type="entry name" value="PG_MUTASE"/>
    <property type="match status" value="1"/>
</dbReference>
<protein>
    <recommendedName>
        <fullName>6-phosphofructo-2-kinase/fructose-2,6-bisphosphatase</fullName>
        <shortName>6PF-2-K/Fru-2,6-P2ase</shortName>
        <shortName>PFK/FBPase</shortName>
    </recommendedName>
    <alternativeName>
        <fullName>6PF-2-K/Fru-2,6-P2ase liver/muscle isozymes</fullName>
    </alternativeName>
    <domain>
        <recommendedName>
            <fullName>6-phosphofructo-2-kinase</fullName>
            <ecNumber>2.7.1.105</ecNumber>
        </recommendedName>
    </domain>
    <domain>
        <recommendedName>
            <fullName>Fructose-2,6-bisphosphatase</fullName>
            <ecNumber>3.1.3.46</ecNumber>
        </recommendedName>
    </domain>
</protein>
<accession>Q91309</accession>
<accession>Q91310</accession>
<comment type="function">
    <text>Synthesis and degradation of fructose 2,6-bisphosphate.</text>
</comment>
<comment type="catalytic activity">
    <reaction>
        <text>beta-D-fructose 2,6-bisphosphate + H2O = beta-D-fructose 6-phosphate + phosphate</text>
        <dbReference type="Rhea" id="RHEA:17289"/>
        <dbReference type="ChEBI" id="CHEBI:15377"/>
        <dbReference type="ChEBI" id="CHEBI:43474"/>
        <dbReference type="ChEBI" id="CHEBI:57634"/>
        <dbReference type="ChEBI" id="CHEBI:58579"/>
        <dbReference type="EC" id="3.1.3.46"/>
    </reaction>
</comment>
<comment type="catalytic activity">
    <reaction>
        <text>beta-D-fructose 6-phosphate + ATP = beta-D-fructose 2,6-bisphosphate + ADP + H(+)</text>
        <dbReference type="Rhea" id="RHEA:15653"/>
        <dbReference type="ChEBI" id="CHEBI:15378"/>
        <dbReference type="ChEBI" id="CHEBI:30616"/>
        <dbReference type="ChEBI" id="CHEBI:57634"/>
        <dbReference type="ChEBI" id="CHEBI:58579"/>
        <dbReference type="ChEBI" id="CHEBI:456216"/>
        <dbReference type="EC" id="2.7.1.105"/>
    </reaction>
</comment>
<comment type="activity regulation">
    <text evidence="1">Phosphorylation results in inhibition of the kinase activity.</text>
</comment>
<comment type="subunit">
    <text evidence="1">Homodimer.</text>
</comment>
<comment type="alternative products">
    <event type="alternative splicing"/>
    <isoform>
        <id>Q91309-1</id>
        <name>Liver</name>
        <name>L-type</name>
        <sequence type="displayed"/>
    </isoform>
    <isoform>
        <id>Q91309-2</id>
        <name>Muscle</name>
        <name>M-type</name>
        <sequence type="described" ref="VSP_004685"/>
    </isoform>
</comment>
<comment type="similarity">
    <text evidence="6">In the C-terminal section; belongs to the phosphoglycerate mutase family.</text>
</comment>